<gene>
    <name evidence="1" type="primary">apt</name>
    <name type="ordered locus">HPAG1_0551</name>
</gene>
<evidence type="ECO:0000255" key="1">
    <source>
        <dbReference type="HAMAP-Rule" id="MF_00004"/>
    </source>
</evidence>
<feature type="chain" id="PRO_1000000295" description="Adenine phosphoribosyltransferase">
    <location>
        <begin position="1"/>
        <end position="179"/>
    </location>
</feature>
<protein>
    <recommendedName>
        <fullName evidence="1">Adenine phosphoribosyltransferase</fullName>
        <shortName evidence="1">APRT</shortName>
        <ecNumber evidence="1">2.4.2.7</ecNumber>
    </recommendedName>
</protein>
<keyword id="KW-0963">Cytoplasm</keyword>
<keyword id="KW-0328">Glycosyltransferase</keyword>
<keyword id="KW-0660">Purine salvage</keyword>
<keyword id="KW-0808">Transferase</keyword>
<organism>
    <name type="scientific">Helicobacter pylori (strain HPAG1)</name>
    <dbReference type="NCBI Taxonomy" id="357544"/>
    <lineage>
        <taxon>Bacteria</taxon>
        <taxon>Pseudomonadati</taxon>
        <taxon>Campylobacterota</taxon>
        <taxon>Epsilonproteobacteria</taxon>
        <taxon>Campylobacterales</taxon>
        <taxon>Helicobacteraceae</taxon>
        <taxon>Helicobacter</taxon>
    </lineage>
</organism>
<sequence>MNETLKEELLQSIREVKDYPKKGILFKDITTLLNYPKLFNKLIDALKKRYLALNIDFIVGIEARGFILGSALAYALGVGFVPVRKKGKLPAHTLSQSYSLEYGSDSIEIHSDAFRGVKGVRVVLIDDLLATGGTALASLELIKALQAECIEACFLIGLKELPGIQLLEERVKTFCLLEC</sequence>
<proteinExistence type="inferred from homology"/>
<name>APT_HELPH</name>
<accession>Q1CTV4</accession>
<reference key="1">
    <citation type="journal article" date="2006" name="Proc. Natl. Acad. Sci. U.S.A.">
        <title>The complete genome sequence of a chronic atrophic gastritis Helicobacter pylori strain: evolution during disease progression.</title>
        <authorList>
            <person name="Oh J.D."/>
            <person name="Kling-Baeckhed H."/>
            <person name="Giannakis M."/>
            <person name="Xu J."/>
            <person name="Fulton R.S."/>
            <person name="Fulton L.A."/>
            <person name="Cordum H.S."/>
            <person name="Wang C."/>
            <person name="Elliott G."/>
            <person name="Edwards J."/>
            <person name="Mardis E.R."/>
            <person name="Engstrand L.G."/>
            <person name="Gordon J.I."/>
        </authorList>
    </citation>
    <scope>NUCLEOTIDE SEQUENCE [LARGE SCALE GENOMIC DNA]</scope>
    <source>
        <strain>HPAG1</strain>
    </source>
</reference>
<comment type="function">
    <text evidence="1">Catalyzes a salvage reaction resulting in the formation of AMP, that is energically less costly than de novo synthesis.</text>
</comment>
<comment type="catalytic activity">
    <reaction evidence="1">
        <text>AMP + diphosphate = 5-phospho-alpha-D-ribose 1-diphosphate + adenine</text>
        <dbReference type="Rhea" id="RHEA:16609"/>
        <dbReference type="ChEBI" id="CHEBI:16708"/>
        <dbReference type="ChEBI" id="CHEBI:33019"/>
        <dbReference type="ChEBI" id="CHEBI:58017"/>
        <dbReference type="ChEBI" id="CHEBI:456215"/>
        <dbReference type="EC" id="2.4.2.7"/>
    </reaction>
</comment>
<comment type="pathway">
    <text evidence="1">Purine metabolism; AMP biosynthesis via salvage pathway; AMP from adenine: step 1/1.</text>
</comment>
<comment type="subunit">
    <text evidence="1">Homodimer.</text>
</comment>
<comment type="subcellular location">
    <subcellularLocation>
        <location evidence="1">Cytoplasm</location>
    </subcellularLocation>
</comment>
<comment type="similarity">
    <text evidence="1">Belongs to the purine/pyrimidine phosphoribosyltransferase family.</text>
</comment>
<dbReference type="EC" id="2.4.2.7" evidence="1"/>
<dbReference type="EMBL" id="CP000241">
    <property type="protein sequence ID" value="ABF84618.1"/>
    <property type="molecule type" value="Genomic_DNA"/>
</dbReference>
<dbReference type="RefSeq" id="WP_001006117.1">
    <property type="nucleotide sequence ID" value="NC_008086.1"/>
</dbReference>
<dbReference type="SMR" id="Q1CTV4"/>
<dbReference type="KEGG" id="hpa:HPAG1_0551"/>
<dbReference type="HOGENOM" id="CLU_063339_3_0_7"/>
<dbReference type="UniPathway" id="UPA00588">
    <property type="reaction ID" value="UER00646"/>
</dbReference>
<dbReference type="GO" id="GO:0005737">
    <property type="term" value="C:cytoplasm"/>
    <property type="evidence" value="ECO:0007669"/>
    <property type="project" value="UniProtKB-SubCell"/>
</dbReference>
<dbReference type="GO" id="GO:0002055">
    <property type="term" value="F:adenine binding"/>
    <property type="evidence" value="ECO:0007669"/>
    <property type="project" value="TreeGrafter"/>
</dbReference>
<dbReference type="GO" id="GO:0003999">
    <property type="term" value="F:adenine phosphoribosyltransferase activity"/>
    <property type="evidence" value="ECO:0007669"/>
    <property type="project" value="UniProtKB-UniRule"/>
</dbReference>
<dbReference type="GO" id="GO:0016208">
    <property type="term" value="F:AMP binding"/>
    <property type="evidence" value="ECO:0007669"/>
    <property type="project" value="TreeGrafter"/>
</dbReference>
<dbReference type="GO" id="GO:0006168">
    <property type="term" value="P:adenine salvage"/>
    <property type="evidence" value="ECO:0007669"/>
    <property type="project" value="InterPro"/>
</dbReference>
<dbReference type="GO" id="GO:0044209">
    <property type="term" value="P:AMP salvage"/>
    <property type="evidence" value="ECO:0007669"/>
    <property type="project" value="UniProtKB-UniRule"/>
</dbReference>
<dbReference type="GO" id="GO:0006166">
    <property type="term" value="P:purine ribonucleoside salvage"/>
    <property type="evidence" value="ECO:0007669"/>
    <property type="project" value="UniProtKB-KW"/>
</dbReference>
<dbReference type="CDD" id="cd06223">
    <property type="entry name" value="PRTases_typeI"/>
    <property type="match status" value="1"/>
</dbReference>
<dbReference type="FunFam" id="3.40.50.2020:FF:000021">
    <property type="entry name" value="Adenine phosphoribosyltransferase"/>
    <property type="match status" value="1"/>
</dbReference>
<dbReference type="Gene3D" id="3.40.50.2020">
    <property type="match status" value="1"/>
</dbReference>
<dbReference type="HAMAP" id="MF_00004">
    <property type="entry name" value="Aden_phosphoribosyltr"/>
    <property type="match status" value="1"/>
</dbReference>
<dbReference type="InterPro" id="IPR005764">
    <property type="entry name" value="Ade_phspho_trans"/>
</dbReference>
<dbReference type="InterPro" id="IPR000836">
    <property type="entry name" value="PRibTrfase_dom"/>
</dbReference>
<dbReference type="InterPro" id="IPR029057">
    <property type="entry name" value="PRTase-like"/>
</dbReference>
<dbReference type="InterPro" id="IPR050054">
    <property type="entry name" value="UPRTase/APRTase"/>
</dbReference>
<dbReference type="NCBIfam" id="TIGR01090">
    <property type="entry name" value="apt"/>
    <property type="match status" value="1"/>
</dbReference>
<dbReference type="NCBIfam" id="NF002634">
    <property type="entry name" value="PRK02304.1-3"/>
    <property type="match status" value="1"/>
</dbReference>
<dbReference type="NCBIfam" id="NF002636">
    <property type="entry name" value="PRK02304.1-5"/>
    <property type="match status" value="1"/>
</dbReference>
<dbReference type="PANTHER" id="PTHR32315">
    <property type="entry name" value="ADENINE PHOSPHORIBOSYLTRANSFERASE"/>
    <property type="match status" value="1"/>
</dbReference>
<dbReference type="PANTHER" id="PTHR32315:SF3">
    <property type="entry name" value="ADENINE PHOSPHORIBOSYLTRANSFERASE"/>
    <property type="match status" value="1"/>
</dbReference>
<dbReference type="Pfam" id="PF00156">
    <property type="entry name" value="Pribosyltran"/>
    <property type="match status" value="1"/>
</dbReference>
<dbReference type="SUPFAM" id="SSF53271">
    <property type="entry name" value="PRTase-like"/>
    <property type="match status" value="1"/>
</dbReference>
<dbReference type="PROSITE" id="PS00103">
    <property type="entry name" value="PUR_PYR_PR_TRANSFER"/>
    <property type="match status" value="1"/>
</dbReference>